<feature type="chain" id="PRO_0000303271" description="tRNA N6-adenosine threonylcarbamoyltransferase">
    <location>
        <begin position="1"/>
        <end position="339"/>
    </location>
</feature>
<feature type="binding site" evidence="1">
    <location>
        <position position="111"/>
    </location>
    <ligand>
        <name>Fe cation</name>
        <dbReference type="ChEBI" id="CHEBI:24875"/>
    </ligand>
</feature>
<feature type="binding site" evidence="1">
    <location>
        <position position="115"/>
    </location>
    <ligand>
        <name>Fe cation</name>
        <dbReference type="ChEBI" id="CHEBI:24875"/>
    </ligand>
</feature>
<feature type="binding site" evidence="1">
    <location>
        <begin position="139"/>
        <end position="143"/>
    </location>
    <ligand>
        <name>substrate</name>
    </ligand>
</feature>
<feature type="binding site" evidence="1">
    <location>
        <position position="172"/>
    </location>
    <ligand>
        <name>substrate</name>
    </ligand>
</feature>
<feature type="binding site" evidence="1">
    <location>
        <position position="185"/>
    </location>
    <ligand>
        <name>substrate</name>
    </ligand>
</feature>
<feature type="binding site" evidence="1">
    <location>
        <position position="189"/>
    </location>
    <ligand>
        <name>substrate</name>
    </ligand>
</feature>
<feature type="binding site" evidence="1">
    <location>
        <position position="280"/>
    </location>
    <ligand>
        <name>substrate</name>
    </ligand>
</feature>
<feature type="binding site" evidence="1">
    <location>
        <position position="308"/>
    </location>
    <ligand>
        <name>Fe cation</name>
        <dbReference type="ChEBI" id="CHEBI:24875"/>
    </ligand>
</feature>
<gene>
    <name evidence="1" type="primary">tsaD</name>
    <name type="synonym">gcp</name>
    <name type="ordered locus">BF2431</name>
</gene>
<comment type="function">
    <text evidence="1">Required for the formation of a threonylcarbamoyl group on adenosine at position 37 (t(6)A37) in tRNAs that read codons beginning with adenine. Is involved in the transfer of the threonylcarbamoyl moiety of threonylcarbamoyl-AMP (TC-AMP) to the N6 group of A37, together with TsaE and TsaB. TsaD likely plays a direct catalytic role in this reaction.</text>
</comment>
<comment type="catalytic activity">
    <reaction evidence="1">
        <text>L-threonylcarbamoyladenylate + adenosine(37) in tRNA = N(6)-L-threonylcarbamoyladenosine(37) in tRNA + AMP + H(+)</text>
        <dbReference type="Rhea" id="RHEA:37059"/>
        <dbReference type="Rhea" id="RHEA-COMP:10162"/>
        <dbReference type="Rhea" id="RHEA-COMP:10163"/>
        <dbReference type="ChEBI" id="CHEBI:15378"/>
        <dbReference type="ChEBI" id="CHEBI:73682"/>
        <dbReference type="ChEBI" id="CHEBI:74411"/>
        <dbReference type="ChEBI" id="CHEBI:74418"/>
        <dbReference type="ChEBI" id="CHEBI:456215"/>
        <dbReference type="EC" id="2.3.1.234"/>
    </reaction>
</comment>
<comment type="cofactor">
    <cofactor evidence="1">
        <name>Fe(2+)</name>
        <dbReference type="ChEBI" id="CHEBI:29033"/>
    </cofactor>
    <text evidence="1">Binds 1 Fe(2+) ion per subunit.</text>
</comment>
<comment type="subcellular location">
    <subcellularLocation>
        <location evidence="1">Cytoplasm</location>
    </subcellularLocation>
</comment>
<comment type="similarity">
    <text evidence="1">Belongs to the KAE1 / TsaD family.</text>
</comment>
<name>TSAD_BACFR</name>
<reference key="1">
    <citation type="journal article" date="2004" name="Proc. Natl. Acad. Sci. U.S.A.">
        <title>Genomic analysis of Bacteroides fragilis reveals extensive DNA inversions regulating cell surface adaptation.</title>
        <authorList>
            <person name="Kuwahara T."/>
            <person name="Yamashita A."/>
            <person name="Hirakawa H."/>
            <person name="Nakayama H."/>
            <person name="Toh H."/>
            <person name="Okada N."/>
            <person name="Kuhara S."/>
            <person name="Hattori M."/>
            <person name="Hayashi T."/>
            <person name="Ohnishi Y."/>
        </authorList>
    </citation>
    <scope>NUCLEOTIDE SEQUENCE [LARGE SCALE GENOMIC DNA]</scope>
    <source>
        <strain>YCH46</strain>
    </source>
</reference>
<accession>Q64TJ9</accession>
<organism>
    <name type="scientific">Bacteroides fragilis (strain YCH46)</name>
    <dbReference type="NCBI Taxonomy" id="295405"/>
    <lineage>
        <taxon>Bacteria</taxon>
        <taxon>Pseudomonadati</taxon>
        <taxon>Bacteroidota</taxon>
        <taxon>Bacteroidia</taxon>
        <taxon>Bacteroidales</taxon>
        <taxon>Bacteroidaceae</taxon>
        <taxon>Bacteroides</taxon>
    </lineage>
</organism>
<evidence type="ECO:0000255" key="1">
    <source>
        <dbReference type="HAMAP-Rule" id="MF_01445"/>
    </source>
</evidence>
<keyword id="KW-0012">Acyltransferase</keyword>
<keyword id="KW-0963">Cytoplasm</keyword>
<keyword id="KW-0408">Iron</keyword>
<keyword id="KW-0479">Metal-binding</keyword>
<keyword id="KW-0808">Transferase</keyword>
<keyword id="KW-0819">tRNA processing</keyword>
<protein>
    <recommendedName>
        <fullName evidence="1">tRNA N6-adenosine threonylcarbamoyltransferase</fullName>
        <ecNumber evidence="1">2.3.1.234</ecNumber>
    </recommendedName>
    <alternativeName>
        <fullName evidence="1">N6-L-threonylcarbamoyladenine synthase</fullName>
        <shortName evidence="1">t(6)A synthase</shortName>
    </alternativeName>
    <alternativeName>
        <fullName evidence="1">t(6)A37 threonylcarbamoyladenosine biosynthesis protein TsaD</fullName>
    </alternativeName>
    <alternativeName>
        <fullName evidence="1">tRNA threonylcarbamoyladenosine biosynthesis protein TsaD</fullName>
    </alternativeName>
</protein>
<proteinExistence type="inferred from homology"/>
<dbReference type="EC" id="2.3.1.234" evidence="1"/>
<dbReference type="EMBL" id="AP006841">
    <property type="protein sequence ID" value="BAD49180.1"/>
    <property type="molecule type" value="Genomic_DNA"/>
</dbReference>
<dbReference type="RefSeq" id="WP_005787941.1">
    <property type="nucleotide sequence ID" value="NZ_UYXF01000005.1"/>
</dbReference>
<dbReference type="RefSeq" id="YP_099714.1">
    <property type="nucleotide sequence ID" value="NC_006347.1"/>
</dbReference>
<dbReference type="SMR" id="Q64TJ9"/>
<dbReference type="STRING" id="295405.BF2431"/>
<dbReference type="GeneID" id="60369509"/>
<dbReference type="KEGG" id="bfr:BF2431"/>
<dbReference type="PATRIC" id="fig|295405.11.peg.2349"/>
<dbReference type="HOGENOM" id="CLU_023208_0_2_10"/>
<dbReference type="OrthoDB" id="9806197at2"/>
<dbReference type="Proteomes" id="UP000002197">
    <property type="component" value="Chromosome"/>
</dbReference>
<dbReference type="GO" id="GO:0005737">
    <property type="term" value="C:cytoplasm"/>
    <property type="evidence" value="ECO:0007669"/>
    <property type="project" value="UniProtKB-SubCell"/>
</dbReference>
<dbReference type="GO" id="GO:0005506">
    <property type="term" value="F:iron ion binding"/>
    <property type="evidence" value="ECO:0007669"/>
    <property type="project" value="UniProtKB-UniRule"/>
</dbReference>
<dbReference type="GO" id="GO:0061711">
    <property type="term" value="F:N(6)-L-threonylcarbamoyladenine synthase activity"/>
    <property type="evidence" value="ECO:0007669"/>
    <property type="project" value="UniProtKB-EC"/>
</dbReference>
<dbReference type="GO" id="GO:0002949">
    <property type="term" value="P:tRNA threonylcarbamoyladenosine modification"/>
    <property type="evidence" value="ECO:0007669"/>
    <property type="project" value="UniProtKB-UniRule"/>
</dbReference>
<dbReference type="CDD" id="cd24133">
    <property type="entry name" value="ASKHA_NBD_TsaD_bac"/>
    <property type="match status" value="1"/>
</dbReference>
<dbReference type="FunFam" id="3.30.420.40:FF:000012">
    <property type="entry name" value="tRNA N6-adenosine threonylcarbamoyltransferase"/>
    <property type="match status" value="1"/>
</dbReference>
<dbReference type="FunFam" id="3.30.420.40:FF:000040">
    <property type="entry name" value="tRNA N6-adenosine threonylcarbamoyltransferase"/>
    <property type="match status" value="1"/>
</dbReference>
<dbReference type="Gene3D" id="3.30.420.40">
    <property type="match status" value="2"/>
</dbReference>
<dbReference type="HAMAP" id="MF_01445">
    <property type="entry name" value="TsaD"/>
    <property type="match status" value="1"/>
</dbReference>
<dbReference type="InterPro" id="IPR043129">
    <property type="entry name" value="ATPase_NBD"/>
</dbReference>
<dbReference type="InterPro" id="IPR000905">
    <property type="entry name" value="Gcp-like_dom"/>
</dbReference>
<dbReference type="InterPro" id="IPR017861">
    <property type="entry name" value="KAE1/TsaD"/>
</dbReference>
<dbReference type="InterPro" id="IPR017860">
    <property type="entry name" value="Peptidase_M22_CS"/>
</dbReference>
<dbReference type="InterPro" id="IPR022450">
    <property type="entry name" value="TsaD"/>
</dbReference>
<dbReference type="NCBIfam" id="TIGR00329">
    <property type="entry name" value="gcp_kae1"/>
    <property type="match status" value="1"/>
</dbReference>
<dbReference type="NCBIfam" id="TIGR03723">
    <property type="entry name" value="T6A_TsaD_YgjD"/>
    <property type="match status" value="1"/>
</dbReference>
<dbReference type="PANTHER" id="PTHR11735">
    <property type="entry name" value="TRNA N6-ADENOSINE THREONYLCARBAMOYLTRANSFERASE"/>
    <property type="match status" value="1"/>
</dbReference>
<dbReference type="PANTHER" id="PTHR11735:SF6">
    <property type="entry name" value="TRNA N6-ADENOSINE THREONYLCARBAMOYLTRANSFERASE, MITOCHONDRIAL"/>
    <property type="match status" value="1"/>
</dbReference>
<dbReference type="Pfam" id="PF00814">
    <property type="entry name" value="TsaD"/>
    <property type="match status" value="1"/>
</dbReference>
<dbReference type="PRINTS" id="PR00789">
    <property type="entry name" value="OSIALOPTASE"/>
</dbReference>
<dbReference type="SUPFAM" id="SSF53067">
    <property type="entry name" value="Actin-like ATPase domain"/>
    <property type="match status" value="2"/>
</dbReference>
<dbReference type="PROSITE" id="PS01016">
    <property type="entry name" value="GLYCOPROTEASE"/>
    <property type="match status" value="1"/>
</dbReference>
<sequence>MSTIILGIESSCDDTSAAVIKDGYLLSNVVSSQAVHEAYGGVVPELASRAHQQNIVPVVHEALKRAGVTKEELSAVAFTRGPGLMGSLLVGVSFAKGFARSLNIPMIDVNHLTGHVLAHFIKEEGEANEQPDFPFLCLLVSGGNSQIILVKAYNDMEILGQTIDDAAGEAIDKCSKVMGLGYPGGPIIDRLARQGNPKAYTFSKPHISGLDYSFSGLKTSFLYSLRDWMKEDPDFIEHHKNDLAASLEATVVDILMDKLRKAAKQYKINEVAVAGGVSANNGLRNAFREHAEKYGWKIFIPKFSYTTDNAAMIAITGYFKYQDKDFCSIEQPAYSRVTL</sequence>